<comment type="function">
    <text evidence="1">Part of the binding-protein-dependent transport system YqgGHIJK. Probably responsible for the translocation of the substrate across the membrane (By similarity).</text>
</comment>
<comment type="subcellular location">
    <subcellularLocation>
        <location>Cell membrane</location>
        <topology>Multi-pass membrane protein</topology>
    </subcellularLocation>
</comment>
<comment type="similarity">
    <text evidence="3">Belongs to the binding-protein-dependent transport system permease family. CysTW subfamily.</text>
</comment>
<dbReference type="EMBL" id="D58414">
    <property type="protein sequence ID" value="BAA09582.1"/>
    <property type="molecule type" value="Genomic_DNA"/>
</dbReference>
<dbReference type="EMBL" id="D84432">
    <property type="protein sequence ID" value="BAA12511.1"/>
    <property type="molecule type" value="Genomic_DNA"/>
</dbReference>
<dbReference type="EMBL" id="AL009126">
    <property type="protein sequence ID" value="CAB14428.2"/>
    <property type="molecule type" value="Genomic_DNA"/>
</dbReference>
<dbReference type="PIR" id="B69956">
    <property type="entry name" value="B69956"/>
</dbReference>
<dbReference type="FunCoup" id="P46339">
    <property type="interactions" value="419"/>
</dbReference>
<dbReference type="STRING" id="224308.BSU24980"/>
<dbReference type="PaxDb" id="224308-BSU24980"/>
<dbReference type="EnsemblBacteria" id="CAB14428">
    <property type="protein sequence ID" value="CAB14428"/>
    <property type="gene ID" value="BSU_24980"/>
</dbReference>
<dbReference type="GeneID" id="938184"/>
<dbReference type="KEGG" id="bsu:BSU24980"/>
<dbReference type="PATRIC" id="fig|224308.179.peg.2717"/>
<dbReference type="eggNOG" id="COG0573">
    <property type="taxonomic scope" value="Bacteria"/>
</dbReference>
<dbReference type="InParanoid" id="P46339"/>
<dbReference type="OrthoDB" id="9785113at2"/>
<dbReference type="PhylomeDB" id="P46339"/>
<dbReference type="BioCyc" id="BSUB:BSU24980-MONOMER"/>
<dbReference type="Proteomes" id="UP000001570">
    <property type="component" value="Chromosome"/>
</dbReference>
<dbReference type="GO" id="GO:0005886">
    <property type="term" value="C:plasma membrane"/>
    <property type="evidence" value="ECO:0000318"/>
    <property type="project" value="GO_Central"/>
</dbReference>
<dbReference type="GO" id="GO:0005315">
    <property type="term" value="F:phosphate transmembrane transporter activity"/>
    <property type="evidence" value="ECO:0007669"/>
    <property type="project" value="InterPro"/>
</dbReference>
<dbReference type="GO" id="GO:0035435">
    <property type="term" value="P:phosphate ion transmembrane transport"/>
    <property type="evidence" value="ECO:0000318"/>
    <property type="project" value="GO_Central"/>
</dbReference>
<dbReference type="CDD" id="cd06261">
    <property type="entry name" value="TM_PBP2"/>
    <property type="match status" value="1"/>
</dbReference>
<dbReference type="Gene3D" id="1.10.3720.10">
    <property type="entry name" value="MetI-like"/>
    <property type="match status" value="1"/>
</dbReference>
<dbReference type="InterPro" id="IPR000515">
    <property type="entry name" value="MetI-like"/>
</dbReference>
<dbReference type="InterPro" id="IPR035906">
    <property type="entry name" value="MetI-like_sf"/>
</dbReference>
<dbReference type="InterPro" id="IPR011864">
    <property type="entry name" value="Phosphate_PstC"/>
</dbReference>
<dbReference type="InterPro" id="IPR051124">
    <property type="entry name" value="Phosphate_Transport_Permease"/>
</dbReference>
<dbReference type="NCBIfam" id="TIGR02138">
    <property type="entry name" value="phosphate_pstC"/>
    <property type="match status" value="1"/>
</dbReference>
<dbReference type="PANTHER" id="PTHR30425:SF2">
    <property type="entry name" value="ABC TRANSPORTER PERMEASE PROTEIN YQGH-RELATED"/>
    <property type="match status" value="1"/>
</dbReference>
<dbReference type="PANTHER" id="PTHR30425">
    <property type="entry name" value="PHOSPHATE TRANSPORT SYSTEM PERMEASE PROTEIN PST"/>
    <property type="match status" value="1"/>
</dbReference>
<dbReference type="Pfam" id="PF00528">
    <property type="entry name" value="BPD_transp_1"/>
    <property type="match status" value="1"/>
</dbReference>
<dbReference type="SUPFAM" id="SSF161098">
    <property type="entry name" value="MetI-like"/>
    <property type="match status" value="1"/>
</dbReference>
<dbReference type="PROSITE" id="PS50928">
    <property type="entry name" value="ABC_TM1"/>
    <property type="match status" value="1"/>
</dbReference>
<name>YQGH_BACSU</name>
<evidence type="ECO:0000250" key="1"/>
<evidence type="ECO:0000255" key="2">
    <source>
        <dbReference type="PROSITE-ProRule" id="PRU00441"/>
    </source>
</evidence>
<evidence type="ECO:0000305" key="3"/>
<sequence length="309" mass="33193">MINNRENMSVSERLISSRQNRQLDEVRGRMIVTACALIMIAASVAITIFLGVKGLQSFLVNGVSPIEFLTSLNWNPTDSDPKYGVLPFIFGSFAVTILSALIAAPLGIAGAIFMTEIAPNWGKKVLQPVIELLVGIPSVVYGFIGLTVLVPFIAQFKSSGTGHSLLAGTIVLSVMILPTITSISADAMASLPKSLREGSYALGATRWQTIRKVLVPAAFPTLMTAVVLGMARAFGEALAVQMVIGNTRVLPESPFDTAGTLTTIITLNMGHTTYGSVENNTLWSMGLVLLVMSFLFILLIRYLSSRRKV</sequence>
<accession>P46339</accession>
<organism>
    <name type="scientific">Bacillus subtilis (strain 168)</name>
    <dbReference type="NCBI Taxonomy" id="224308"/>
    <lineage>
        <taxon>Bacteria</taxon>
        <taxon>Bacillati</taxon>
        <taxon>Bacillota</taxon>
        <taxon>Bacilli</taxon>
        <taxon>Bacillales</taxon>
        <taxon>Bacillaceae</taxon>
        <taxon>Bacillus</taxon>
    </lineage>
</organism>
<proteinExistence type="inferred from homology"/>
<keyword id="KW-1003">Cell membrane</keyword>
<keyword id="KW-0472">Membrane</keyword>
<keyword id="KW-1185">Reference proteome</keyword>
<keyword id="KW-0812">Transmembrane</keyword>
<keyword id="KW-1133">Transmembrane helix</keyword>
<keyword id="KW-0813">Transport</keyword>
<protein>
    <recommendedName>
        <fullName>Probable ABC transporter permease protein YqgH</fullName>
    </recommendedName>
</protein>
<reference key="1">
    <citation type="journal article" date="1996" name="Microbiology">
        <title>A Bacillus subtilis gene cluster similar to the Escherichia coli phosphate-specific transport (pst) operon: evidence for a tandemly arranged pstB gene.</title>
        <authorList>
            <person name="Takemaru K."/>
            <person name="Mizuno M."/>
            <person name="Kobayashi Y."/>
        </authorList>
    </citation>
    <scope>NUCLEOTIDE SEQUENCE [GENOMIC DNA]</scope>
    <source>
        <strain>168 / JH642</strain>
    </source>
</reference>
<reference key="2">
    <citation type="journal article" date="1996" name="Microbiology">
        <title>Systematic sequencing of the 283 kb 210 degrees-232 degrees region of the Bacillus subtilis genome containing the skin element and many sporulation genes.</title>
        <authorList>
            <person name="Mizuno M."/>
            <person name="Masuda S."/>
            <person name="Takemaru K."/>
            <person name="Hosono S."/>
            <person name="Sato T."/>
            <person name="Takeuchi M."/>
            <person name="Kobayashi Y."/>
        </authorList>
    </citation>
    <scope>NUCLEOTIDE SEQUENCE [GENOMIC DNA]</scope>
    <source>
        <strain>168 / JH642</strain>
    </source>
</reference>
<reference key="3">
    <citation type="journal article" date="1997" name="Nature">
        <title>The complete genome sequence of the Gram-positive bacterium Bacillus subtilis.</title>
        <authorList>
            <person name="Kunst F."/>
            <person name="Ogasawara N."/>
            <person name="Moszer I."/>
            <person name="Albertini A.M."/>
            <person name="Alloni G."/>
            <person name="Azevedo V."/>
            <person name="Bertero M.G."/>
            <person name="Bessieres P."/>
            <person name="Bolotin A."/>
            <person name="Borchert S."/>
            <person name="Borriss R."/>
            <person name="Boursier L."/>
            <person name="Brans A."/>
            <person name="Braun M."/>
            <person name="Brignell S.C."/>
            <person name="Bron S."/>
            <person name="Brouillet S."/>
            <person name="Bruschi C.V."/>
            <person name="Caldwell B."/>
            <person name="Capuano V."/>
            <person name="Carter N.M."/>
            <person name="Choi S.-K."/>
            <person name="Codani J.-J."/>
            <person name="Connerton I.F."/>
            <person name="Cummings N.J."/>
            <person name="Daniel R.A."/>
            <person name="Denizot F."/>
            <person name="Devine K.M."/>
            <person name="Duesterhoeft A."/>
            <person name="Ehrlich S.D."/>
            <person name="Emmerson P.T."/>
            <person name="Entian K.-D."/>
            <person name="Errington J."/>
            <person name="Fabret C."/>
            <person name="Ferrari E."/>
            <person name="Foulger D."/>
            <person name="Fritz C."/>
            <person name="Fujita M."/>
            <person name="Fujita Y."/>
            <person name="Fuma S."/>
            <person name="Galizzi A."/>
            <person name="Galleron N."/>
            <person name="Ghim S.-Y."/>
            <person name="Glaser P."/>
            <person name="Goffeau A."/>
            <person name="Golightly E.J."/>
            <person name="Grandi G."/>
            <person name="Guiseppi G."/>
            <person name="Guy B.J."/>
            <person name="Haga K."/>
            <person name="Haiech J."/>
            <person name="Harwood C.R."/>
            <person name="Henaut A."/>
            <person name="Hilbert H."/>
            <person name="Holsappel S."/>
            <person name="Hosono S."/>
            <person name="Hullo M.-F."/>
            <person name="Itaya M."/>
            <person name="Jones L.-M."/>
            <person name="Joris B."/>
            <person name="Karamata D."/>
            <person name="Kasahara Y."/>
            <person name="Klaerr-Blanchard M."/>
            <person name="Klein C."/>
            <person name="Kobayashi Y."/>
            <person name="Koetter P."/>
            <person name="Koningstein G."/>
            <person name="Krogh S."/>
            <person name="Kumano M."/>
            <person name="Kurita K."/>
            <person name="Lapidus A."/>
            <person name="Lardinois S."/>
            <person name="Lauber J."/>
            <person name="Lazarevic V."/>
            <person name="Lee S.-M."/>
            <person name="Levine A."/>
            <person name="Liu H."/>
            <person name="Masuda S."/>
            <person name="Mauel C."/>
            <person name="Medigue C."/>
            <person name="Medina N."/>
            <person name="Mellado R.P."/>
            <person name="Mizuno M."/>
            <person name="Moestl D."/>
            <person name="Nakai S."/>
            <person name="Noback M."/>
            <person name="Noone D."/>
            <person name="O'Reilly M."/>
            <person name="Ogawa K."/>
            <person name="Ogiwara A."/>
            <person name="Oudega B."/>
            <person name="Park S.-H."/>
            <person name="Parro V."/>
            <person name="Pohl T.M."/>
            <person name="Portetelle D."/>
            <person name="Porwollik S."/>
            <person name="Prescott A.M."/>
            <person name="Presecan E."/>
            <person name="Pujic P."/>
            <person name="Purnelle B."/>
            <person name="Rapoport G."/>
            <person name="Rey M."/>
            <person name="Reynolds S."/>
            <person name="Rieger M."/>
            <person name="Rivolta C."/>
            <person name="Rocha E."/>
            <person name="Roche B."/>
            <person name="Rose M."/>
            <person name="Sadaie Y."/>
            <person name="Sato T."/>
            <person name="Scanlan E."/>
            <person name="Schleich S."/>
            <person name="Schroeter R."/>
            <person name="Scoffone F."/>
            <person name="Sekiguchi J."/>
            <person name="Sekowska A."/>
            <person name="Seror S.J."/>
            <person name="Serror P."/>
            <person name="Shin B.-S."/>
            <person name="Soldo B."/>
            <person name="Sorokin A."/>
            <person name="Tacconi E."/>
            <person name="Takagi T."/>
            <person name="Takahashi H."/>
            <person name="Takemaru K."/>
            <person name="Takeuchi M."/>
            <person name="Tamakoshi A."/>
            <person name="Tanaka T."/>
            <person name="Terpstra P."/>
            <person name="Tognoni A."/>
            <person name="Tosato V."/>
            <person name="Uchiyama S."/>
            <person name="Vandenbol M."/>
            <person name="Vannier F."/>
            <person name="Vassarotti A."/>
            <person name="Viari A."/>
            <person name="Wambutt R."/>
            <person name="Wedler E."/>
            <person name="Wedler H."/>
            <person name="Weitzenegger T."/>
            <person name="Winters P."/>
            <person name="Wipat A."/>
            <person name="Yamamoto H."/>
            <person name="Yamane K."/>
            <person name="Yasumoto K."/>
            <person name="Yata K."/>
            <person name="Yoshida K."/>
            <person name="Yoshikawa H.-F."/>
            <person name="Zumstein E."/>
            <person name="Yoshikawa H."/>
            <person name="Danchin A."/>
        </authorList>
    </citation>
    <scope>NUCLEOTIDE SEQUENCE [LARGE SCALE GENOMIC DNA]</scope>
    <source>
        <strain>168</strain>
    </source>
</reference>
<reference key="4">
    <citation type="journal article" date="2009" name="Microbiology">
        <title>From a consortium sequence to a unified sequence: the Bacillus subtilis 168 reference genome a decade later.</title>
        <authorList>
            <person name="Barbe V."/>
            <person name="Cruveiller S."/>
            <person name="Kunst F."/>
            <person name="Lenoble P."/>
            <person name="Meurice G."/>
            <person name="Sekowska A."/>
            <person name="Vallenet D."/>
            <person name="Wang T."/>
            <person name="Moszer I."/>
            <person name="Medigue C."/>
            <person name="Danchin A."/>
        </authorList>
    </citation>
    <scope>SEQUENCE REVISION TO 111</scope>
</reference>
<feature type="chain" id="PRO_0000060271" description="Probable ABC transporter permease protein YqgH">
    <location>
        <begin position="1"/>
        <end position="309"/>
    </location>
</feature>
<feature type="transmembrane region" description="Helical" evidence="2">
    <location>
        <begin position="30"/>
        <end position="50"/>
    </location>
</feature>
<feature type="transmembrane region" description="Helical" evidence="2">
    <location>
        <begin position="88"/>
        <end position="108"/>
    </location>
</feature>
<feature type="transmembrane region" description="Helical" evidence="2">
    <location>
        <begin position="133"/>
        <end position="153"/>
    </location>
</feature>
<feature type="transmembrane region" description="Helical" evidence="2">
    <location>
        <begin position="165"/>
        <end position="185"/>
    </location>
</feature>
<feature type="transmembrane region" description="Helical" evidence="2">
    <location>
        <begin position="214"/>
        <end position="234"/>
    </location>
</feature>
<feature type="transmembrane region" description="Helical" evidence="2">
    <location>
        <begin position="280"/>
        <end position="300"/>
    </location>
</feature>
<feature type="domain" description="ABC transmembrane type-1" evidence="2">
    <location>
        <begin position="89"/>
        <end position="300"/>
    </location>
</feature>
<feature type="sequence conflict" description="In Ref. 1; BAA09582 and 2; BAA12511." evidence="3" ref="1 2">
    <original>A</original>
    <variation>P</variation>
    <location>
        <position position="111"/>
    </location>
</feature>
<gene>
    <name type="primary">yqgH</name>
    <name type="synonym">yzmC</name>
    <name type="ordered locus">BSU24980</name>
</gene>